<gene>
    <name evidence="1" type="primary">rpsO</name>
    <name type="ordered locus">Sala_0542</name>
</gene>
<keyword id="KW-1185">Reference proteome</keyword>
<keyword id="KW-0687">Ribonucleoprotein</keyword>
<keyword id="KW-0689">Ribosomal protein</keyword>
<keyword id="KW-0694">RNA-binding</keyword>
<keyword id="KW-0699">rRNA-binding</keyword>
<name>RS15_SPHAL</name>
<protein>
    <recommendedName>
        <fullName evidence="1">Small ribosomal subunit protein uS15</fullName>
    </recommendedName>
    <alternativeName>
        <fullName evidence="3">30S ribosomal protein S15</fullName>
    </alternativeName>
</protein>
<evidence type="ECO:0000255" key="1">
    <source>
        <dbReference type="HAMAP-Rule" id="MF_01343"/>
    </source>
</evidence>
<evidence type="ECO:0000256" key="2">
    <source>
        <dbReference type="SAM" id="MobiDB-lite"/>
    </source>
</evidence>
<evidence type="ECO:0000305" key="3"/>
<accession>Q1GVQ9</accession>
<reference key="1">
    <citation type="journal article" date="2009" name="Proc. Natl. Acad. Sci. U.S.A.">
        <title>The genomic basis of trophic strategy in marine bacteria.</title>
        <authorList>
            <person name="Lauro F.M."/>
            <person name="McDougald D."/>
            <person name="Thomas T."/>
            <person name="Williams T.J."/>
            <person name="Egan S."/>
            <person name="Rice S."/>
            <person name="DeMaere M.Z."/>
            <person name="Ting L."/>
            <person name="Ertan H."/>
            <person name="Johnson J."/>
            <person name="Ferriera S."/>
            <person name="Lapidus A."/>
            <person name="Anderson I."/>
            <person name="Kyrpides N."/>
            <person name="Munk A.C."/>
            <person name="Detter C."/>
            <person name="Han C.S."/>
            <person name="Brown M.V."/>
            <person name="Robb F.T."/>
            <person name="Kjelleberg S."/>
            <person name="Cavicchioli R."/>
        </authorList>
    </citation>
    <scope>NUCLEOTIDE SEQUENCE [LARGE SCALE GENOMIC DNA]</scope>
    <source>
        <strain>DSM 13593 / LMG 18877 / RB2256</strain>
    </source>
</reference>
<comment type="function">
    <text evidence="1">One of the primary rRNA binding proteins, it binds directly to 16S rRNA where it helps nucleate assembly of the platform of the 30S subunit by binding and bridging several RNA helices of the 16S rRNA.</text>
</comment>
<comment type="function">
    <text evidence="1">Forms an intersubunit bridge (bridge B4) with the 23S rRNA of the 50S subunit in the ribosome.</text>
</comment>
<comment type="subunit">
    <text evidence="1">Part of the 30S ribosomal subunit. Forms a bridge to the 50S subunit in the 70S ribosome, contacting the 23S rRNA.</text>
</comment>
<comment type="similarity">
    <text evidence="1">Belongs to the universal ribosomal protein uS15 family.</text>
</comment>
<organism>
    <name type="scientific">Sphingopyxis alaskensis (strain DSM 13593 / LMG 18877 / RB2256)</name>
    <name type="common">Sphingomonas alaskensis</name>
    <dbReference type="NCBI Taxonomy" id="317655"/>
    <lineage>
        <taxon>Bacteria</taxon>
        <taxon>Pseudomonadati</taxon>
        <taxon>Pseudomonadota</taxon>
        <taxon>Alphaproteobacteria</taxon>
        <taxon>Sphingomonadales</taxon>
        <taxon>Sphingomonadaceae</taxon>
        <taxon>Sphingopyxis</taxon>
    </lineage>
</organism>
<sequence length="89" mass="10318">MSITAERKAEVIKDNARDKGDTGSPEVQVAILTDRINTLTEHFKTHRKDNHSRRGLLMMVNKRRSLLDYLRKKDEGRYQALIAKLGLRK</sequence>
<feature type="chain" id="PRO_0000255532" description="Small ribosomal subunit protein uS15">
    <location>
        <begin position="1"/>
        <end position="89"/>
    </location>
</feature>
<feature type="region of interest" description="Disordered" evidence="2">
    <location>
        <begin position="1"/>
        <end position="26"/>
    </location>
</feature>
<feature type="compositionally biased region" description="Basic and acidic residues" evidence="2">
    <location>
        <begin position="1"/>
        <end position="21"/>
    </location>
</feature>
<dbReference type="EMBL" id="CP000356">
    <property type="protein sequence ID" value="ABF52263.1"/>
    <property type="molecule type" value="Genomic_DNA"/>
</dbReference>
<dbReference type="RefSeq" id="WP_011540854.1">
    <property type="nucleotide sequence ID" value="NC_008048.1"/>
</dbReference>
<dbReference type="SMR" id="Q1GVQ9"/>
<dbReference type="STRING" id="317655.Sala_0542"/>
<dbReference type="KEGG" id="sal:Sala_0542"/>
<dbReference type="eggNOG" id="COG0184">
    <property type="taxonomic scope" value="Bacteria"/>
</dbReference>
<dbReference type="HOGENOM" id="CLU_148518_0_0_5"/>
<dbReference type="OrthoDB" id="9799262at2"/>
<dbReference type="Proteomes" id="UP000006578">
    <property type="component" value="Chromosome"/>
</dbReference>
<dbReference type="GO" id="GO:0022627">
    <property type="term" value="C:cytosolic small ribosomal subunit"/>
    <property type="evidence" value="ECO:0007669"/>
    <property type="project" value="TreeGrafter"/>
</dbReference>
<dbReference type="GO" id="GO:0019843">
    <property type="term" value="F:rRNA binding"/>
    <property type="evidence" value="ECO:0007669"/>
    <property type="project" value="UniProtKB-UniRule"/>
</dbReference>
<dbReference type="GO" id="GO:0003735">
    <property type="term" value="F:structural constituent of ribosome"/>
    <property type="evidence" value="ECO:0007669"/>
    <property type="project" value="InterPro"/>
</dbReference>
<dbReference type="GO" id="GO:0006412">
    <property type="term" value="P:translation"/>
    <property type="evidence" value="ECO:0007669"/>
    <property type="project" value="UniProtKB-UniRule"/>
</dbReference>
<dbReference type="CDD" id="cd00353">
    <property type="entry name" value="Ribosomal_S15p_S13e"/>
    <property type="match status" value="1"/>
</dbReference>
<dbReference type="FunFam" id="1.10.287.10:FF:000002">
    <property type="entry name" value="30S ribosomal protein S15"/>
    <property type="match status" value="1"/>
</dbReference>
<dbReference type="Gene3D" id="6.10.250.3130">
    <property type="match status" value="1"/>
</dbReference>
<dbReference type="Gene3D" id="1.10.287.10">
    <property type="entry name" value="S15/NS1, RNA-binding"/>
    <property type="match status" value="1"/>
</dbReference>
<dbReference type="HAMAP" id="MF_01343_B">
    <property type="entry name" value="Ribosomal_uS15_B"/>
    <property type="match status" value="1"/>
</dbReference>
<dbReference type="InterPro" id="IPR000589">
    <property type="entry name" value="Ribosomal_uS15"/>
</dbReference>
<dbReference type="InterPro" id="IPR005290">
    <property type="entry name" value="Ribosomal_uS15_bac-type"/>
</dbReference>
<dbReference type="InterPro" id="IPR009068">
    <property type="entry name" value="uS15_NS1_RNA-bd_sf"/>
</dbReference>
<dbReference type="NCBIfam" id="TIGR00952">
    <property type="entry name" value="S15_bact"/>
    <property type="match status" value="1"/>
</dbReference>
<dbReference type="PANTHER" id="PTHR23321">
    <property type="entry name" value="RIBOSOMAL PROTEIN S15, BACTERIAL AND ORGANELLAR"/>
    <property type="match status" value="1"/>
</dbReference>
<dbReference type="PANTHER" id="PTHR23321:SF26">
    <property type="entry name" value="SMALL RIBOSOMAL SUBUNIT PROTEIN US15M"/>
    <property type="match status" value="1"/>
</dbReference>
<dbReference type="Pfam" id="PF00312">
    <property type="entry name" value="Ribosomal_S15"/>
    <property type="match status" value="1"/>
</dbReference>
<dbReference type="SMART" id="SM01387">
    <property type="entry name" value="Ribosomal_S15"/>
    <property type="match status" value="1"/>
</dbReference>
<dbReference type="SUPFAM" id="SSF47060">
    <property type="entry name" value="S15/NS1 RNA-binding domain"/>
    <property type="match status" value="1"/>
</dbReference>
<dbReference type="PROSITE" id="PS00362">
    <property type="entry name" value="RIBOSOMAL_S15"/>
    <property type="match status" value="1"/>
</dbReference>
<proteinExistence type="inferred from homology"/>